<accession>C6E4P9</accession>
<gene>
    <name evidence="1" type="primary">rpmC</name>
    <name type="ordered locus">GM21_3320</name>
</gene>
<feature type="chain" id="PRO_1000205628" description="Large ribosomal subunit protein uL29">
    <location>
        <begin position="1"/>
        <end position="62"/>
    </location>
</feature>
<dbReference type="EMBL" id="CP001661">
    <property type="protein sequence ID" value="ACT19345.1"/>
    <property type="molecule type" value="Genomic_DNA"/>
</dbReference>
<dbReference type="SMR" id="C6E4P9"/>
<dbReference type="STRING" id="443144.GM21_3320"/>
<dbReference type="KEGG" id="gem:GM21_3320"/>
<dbReference type="eggNOG" id="COG0255">
    <property type="taxonomic scope" value="Bacteria"/>
</dbReference>
<dbReference type="HOGENOM" id="CLU_158491_5_2_7"/>
<dbReference type="OrthoDB" id="9815192at2"/>
<dbReference type="GO" id="GO:0022625">
    <property type="term" value="C:cytosolic large ribosomal subunit"/>
    <property type="evidence" value="ECO:0007669"/>
    <property type="project" value="TreeGrafter"/>
</dbReference>
<dbReference type="GO" id="GO:0003735">
    <property type="term" value="F:structural constituent of ribosome"/>
    <property type="evidence" value="ECO:0007669"/>
    <property type="project" value="InterPro"/>
</dbReference>
<dbReference type="GO" id="GO:0006412">
    <property type="term" value="P:translation"/>
    <property type="evidence" value="ECO:0007669"/>
    <property type="project" value="UniProtKB-UniRule"/>
</dbReference>
<dbReference type="CDD" id="cd00427">
    <property type="entry name" value="Ribosomal_L29_HIP"/>
    <property type="match status" value="1"/>
</dbReference>
<dbReference type="FunFam" id="1.10.287.310:FF:000001">
    <property type="entry name" value="50S ribosomal protein L29"/>
    <property type="match status" value="1"/>
</dbReference>
<dbReference type="Gene3D" id="1.10.287.310">
    <property type="match status" value="1"/>
</dbReference>
<dbReference type="HAMAP" id="MF_00374">
    <property type="entry name" value="Ribosomal_uL29"/>
    <property type="match status" value="1"/>
</dbReference>
<dbReference type="InterPro" id="IPR050063">
    <property type="entry name" value="Ribosomal_protein_uL29"/>
</dbReference>
<dbReference type="InterPro" id="IPR001854">
    <property type="entry name" value="Ribosomal_uL29"/>
</dbReference>
<dbReference type="InterPro" id="IPR018254">
    <property type="entry name" value="Ribosomal_uL29_CS"/>
</dbReference>
<dbReference type="InterPro" id="IPR036049">
    <property type="entry name" value="Ribosomal_uL29_sf"/>
</dbReference>
<dbReference type="NCBIfam" id="TIGR00012">
    <property type="entry name" value="L29"/>
    <property type="match status" value="1"/>
</dbReference>
<dbReference type="PANTHER" id="PTHR10916">
    <property type="entry name" value="60S RIBOSOMAL PROTEIN L35/50S RIBOSOMAL PROTEIN L29"/>
    <property type="match status" value="1"/>
</dbReference>
<dbReference type="PANTHER" id="PTHR10916:SF0">
    <property type="entry name" value="LARGE RIBOSOMAL SUBUNIT PROTEIN UL29C"/>
    <property type="match status" value="1"/>
</dbReference>
<dbReference type="Pfam" id="PF00831">
    <property type="entry name" value="Ribosomal_L29"/>
    <property type="match status" value="1"/>
</dbReference>
<dbReference type="SUPFAM" id="SSF46561">
    <property type="entry name" value="Ribosomal protein L29 (L29p)"/>
    <property type="match status" value="1"/>
</dbReference>
<dbReference type="PROSITE" id="PS00579">
    <property type="entry name" value="RIBOSOMAL_L29"/>
    <property type="match status" value="1"/>
</dbReference>
<sequence>MKANELKNATAAELEAKGTELTKELFNVKFQLHTGRLENTSKVSNLRKDIARVKTILREKRG</sequence>
<organism>
    <name type="scientific">Geobacter sp. (strain M21)</name>
    <dbReference type="NCBI Taxonomy" id="443144"/>
    <lineage>
        <taxon>Bacteria</taxon>
        <taxon>Pseudomonadati</taxon>
        <taxon>Thermodesulfobacteriota</taxon>
        <taxon>Desulfuromonadia</taxon>
        <taxon>Geobacterales</taxon>
        <taxon>Geobacteraceae</taxon>
        <taxon>Geobacter</taxon>
    </lineage>
</organism>
<protein>
    <recommendedName>
        <fullName evidence="1">Large ribosomal subunit protein uL29</fullName>
    </recommendedName>
    <alternativeName>
        <fullName evidence="2">50S ribosomal protein L29</fullName>
    </alternativeName>
</protein>
<evidence type="ECO:0000255" key="1">
    <source>
        <dbReference type="HAMAP-Rule" id="MF_00374"/>
    </source>
</evidence>
<evidence type="ECO:0000305" key="2"/>
<name>RL29_GEOSM</name>
<keyword id="KW-0687">Ribonucleoprotein</keyword>
<keyword id="KW-0689">Ribosomal protein</keyword>
<reference key="1">
    <citation type="submission" date="2009-07" db="EMBL/GenBank/DDBJ databases">
        <title>Complete sequence of Geobacter sp. M21.</title>
        <authorList>
            <consortium name="US DOE Joint Genome Institute"/>
            <person name="Lucas S."/>
            <person name="Copeland A."/>
            <person name="Lapidus A."/>
            <person name="Glavina del Rio T."/>
            <person name="Dalin E."/>
            <person name="Tice H."/>
            <person name="Bruce D."/>
            <person name="Goodwin L."/>
            <person name="Pitluck S."/>
            <person name="Saunders E."/>
            <person name="Brettin T."/>
            <person name="Detter J.C."/>
            <person name="Han C."/>
            <person name="Larimer F."/>
            <person name="Land M."/>
            <person name="Hauser L."/>
            <person name="Kyrpides N."/>
            <person name="Ovchinnikova G."/>
            <person name="Lovley D."/>
        </authorList>
    </citation>
    <scope>NUCLEOTIDE SEQUENCE [LARGE SCALE GENOMIC DNA]</scope>
    <source>
        <strain>M21</strain>
    </source>
</reference>
<proteinExistence type="inferred from homology"/>
<comment type="similarity">
    <text evidence="1">Belongs to the universal ribosomal protein uL29 family.</text>
</comment>